<evidence type="ECO:0000255" key="1">
    <source>
        <dbReference type="HAMAP-Rule" id="MF_00528"/>
    </source>
</evidence>
<feature type="chain" id="PRO_0000122991" description="dTTP/UTP pyrophosphatase">
    <location>
        <begin position="1"/>
        <end position="193"/>
    </location>
</feature>
<feature type="active site" description="Proton acceptor" evidence="1">
    <location>
        <position position="77"/>
    </location>
</feature>
<feature type="site" description="Important for substrate specificity" evidence="1">
    <location>
        <position position="18"/>
    </location>
</feature>
<feature type="site" description="Important for substrate specificity" evidence="1">
    <location>
        <position position="78"/>
    </location>
</feature>
<feature type="site" description="Important for substrate specificity" evidence="1">
    <location>
        <position position="160"/>
    </location>
</feature>
<accession>Q8A749</accession>
<organism>
    <name type="scientific">Bacteroides thetaiotaomicron (strain ATCC 29148 / DSM 2079 / JCM 5827 / CCUG 10774 / NCTC 10582 / VPI-5482 / E50)</name>
    <dbReference type="NCBI Taxonomy" id="226186"/>
    <lineage>
        <taxon>Bacteria</taxon>
        <taxon>Pseudomonadati</taxon>
        <taxon>Bacteroidota</taxon>
        <taxon>Bacteroidia</taxon>
        <taxon>Bacteroidales</taxon>
        <taxon>Bacteroidaceae</taxon>
        <taxon>Bacteroides</taxon>
    </lineage>
</organism>
<sequence>MLGNLDKYQIILASNSPRRKELMSGLGVDYVVRTLPDVDESYPADLAGAEIPEYISREKADAYRSIMQPGELLITADTIVWLDGKVLGKPEGREGAVEMLRSLSGKSHQVFTGVCLTTTEWQKSFTAASDVEFDVLSEEEIRYYVDKYQPMDKAGAYGVQEWIGYIGVKSISGSFYNIMGLPIQKLYGELKKL</sequence>
<reference key="1">
    <citation type="journal article" date="2003" name="Science">
        <title>A genomic view of the human-Bacteroides thetaiotaomicron symbiosis.</title>
        <authorList>
            <person name="Xu J."/>
            <person name="Bjursell M.K."/>
            <person name="Himrod J."/>
            <person name="Deng S."/>
            <person name="Carmichael L.K."/>
            <person name="Chiang H.C."/>
            <person name="Hooper L.V."/>
            <person name="Gordon J.I."/>
        </authorList>
    </citation>
    <scope>NUCLEOTIDE SEQUENCE [LARGE SCALE GENOMIC DNA]</scope>
    <source>
        <strain>ATCC 29148 / DSM 2079 / JCM 5827 / CCUG 10774 / NCTC 10582 / VPI-5482 / E50</strain>
    </source>
</reference>
<proteinExistence type="inferred from homology"/>
<comment type="function">
    <text evidence="1">Nucleoside triphosphate pyrophosphatase that hydrolyzes dTTP and UTP. May have a dual role in cell division arrest and in preventing the incorporation of modified nucleotides into cellular nucleic acids.</text>
</comment>
<comment type="catalytic activity">
    <reaction evidence="1">
        <text>dTTP + H2O = dTMP + diphosphate + H(+)</text>
        <dbReference type="Rhea" id="RHEA:28534"/>
        <dbReference type="ChEBI" id="CHEBI:15377"/>
        <dbReference type="ChEBI" id="CHEBI:15378"/>
        <dbReference type="ChEBI" id="CHEBI:33019"/>
        <dbReference type="ChEBI" id="CHEBI:37568"/>
        <dbReference type="ChEBI" id="CHEBI:63528"/>
        <dbReference type="EC" id="3.6.1.9"/>
    </reaction>
</comment>
<comment type="catalytic activity">
    <reaction evidence="1">
        <text>UTP + H2O = UMP + diphosphate + H(+)</text>
        <dbReference type="Rhea" id="RHEA:29395"/>
        <dbReference type="ChEBI" id="CHEBI:15377"/>
        <dbReference type="ChEBI" id="CHEBI:15378"/>
        <dbReference type="ChEBI" id="CHEBI:33019"/>
        <dbReference type="ChEBI" id="CHEBI:46398"/>
        <dbReference type="ChEBI" id="CHEBI:57865"/>
        <dbReference type="EC" id="3.6.1.9"/>
    </reaction>
</comment>
<comment type="cofactor">
    <cofactor evidence="1">
        <name>a divalent metal cation</name>
        <dbReference type="ChEBI" id="CHEBI:60240"/>
    </cofactor>
</comment>
<comment type="subcellular location">
    <subcellularLocation>
        <location evidence="1">Cytoplasm</location>
    </subcellularLocation>
</comment>
<comment type="similarity">
    <text evidence="1">Belongs to the Maf family. YhdE subfamily.</text>
</comment>
<protein>
    <recommendedName>
        <fullName evidence="1">dTTP/UTP pyrophosphatase</fullName>
        <shortName evidence="1">dTTPase/UTPase</shortName>
        <ecNumber evidence="1">3.6.1.9</ecNumber>
    </recommendedName>
    <alternativeName>
        <fullName evidence="1">Nucleoside triphosphate pyrophosphatase</fullName>
    </alternativeName>
    <alternativeName>
        <fullName evidence="1">Nucleotide pyrophosphatase</fullName>
        <shortName evidence="1">Nucleotide PPase</shortName>
    </alternativeName>
</protein>
<dbReference type="EC" id="3.6.1.9" evidence="1"/>
<dbReference type="EMBL" id="AE015928">
    <property type="protein sequence ID" value="AAO76783.1"/>
    <property type="molecule type" value="Genomic_DNA"/>
</dbReference>
<dbReference type="RefSeq" id="NP_810589.1">
    <property type="nucleotide sequence ID" value="NC_004663.1"/>
</dbReference>
<dbReference type="RefSeq" id="WP_011107938.1">
    <property type="nucleotide sequence ID" value="NC_004663.1"/>
</dbReference>
<dbReference type="SMR" id="Q8A749"/>
<dbReference type="FunCoup" id="Q8A749">
    <property type="interactions" value="319"/>
</dbReference>
<dbReference type="STRING" id="226186.BT_1676"/>
<dbReference type="PaxDb" id="226186-BT_1676"/>
<dbReference type="EnsemblBacteria" id="AAO76783">
    <property type="protein sequence ID" value="AAO76783"/>
    <property type="gene ID" value="BT_1676"/>
</dbReference>
<dbReference type="GeneID" id="60927663"/>
<dbReference type="KEGG" id="bth:BT_1676"/>
<dbReference type="PATRIC" id="fig|226186.12.peg.1718"/>
<dbReference type="eggNOG" id="COG0424">
    <property type="taxonomic scope" value="Bacteria"/>
</dbReference>
<dbReference type="HOGENOM" id="CLU_040416_0_0_10"/>
<dbReference type="InParanoid" id="Q8A749"/>
<dbReference type="OrthoDB" id="9807767at2"/>
<dbReference type="Proteomes" id="UP000001414">
    <property type="component" value="Chromosome"/>
</dbReference>
<dbReference type="GO" id="GO:0005737">
    <property type="term" value="C:cytoplasm"/>
    <property type="evidence" value="ECO:0007669"/>
    <property type="project" value="UniProtKB-SubCell"/>
</dbReference>
<dbReference type="GO" id="GO:0036218">
    <property type="term" value="F:dTTP diphosphatase activity"/>
    <property type="evidence" value="ECO:0007669"/>
    <property type="project" value="RHEA"/>
</dbReference>
<dbReference type="GO" id="GO:0047429">
    <property type="term" value="F:nucleoside triphosphate diphosphatase activity"/>
    <property type="evidence" value="ECO:0000318"/>
    <property type="project" value="GO_Central"/>
</dbReference>
<dbReference type="GO" id="GO:0036221">
    <property type="term" value="F:UTP diphosphatase activity"/>
    <property type="evidence" value="ECO:0007669"/>
    <property type="project" value="RHEA"/>
</dbReference>
<dbReference type="GO" id="GO:0009117">
    <property type="term" value="P:nucleotide metabolic process"/>
    <property type="evidence" value="ECO:0007669"/>
    <property type="project" value="UniProtKB-KW"/>
</dbReference>
<dbReference type="CDD" id="cd00555">
    <property type="entry name" value="Maf"/>
    <property type="match status" value="1"/>
</dbReference>
<dbReference type="FunFam" id="3.90.950.10:FF:000005">
    <property type="entry name" value="7-methyl-GTP pyrophosphatase"/>
    <property type="match status" value="1"/>
</dbReference>
<dbReference type="Gene3D" id="3.90.950.10">
    <property type="match status" value="1"/>
</dbReference>
<dbReference type="HAMAP" id="MF_00528">
    <property type="entry name" value="Maf"/>
    <property type="match status" value="1"/>
</dbReference>
<dbReference type="InterPro" id="IPR029001">
    <property type="entry name" value="ITPase-like_fam"/>
</dbReference>
<dbReference type="InterPro" id="IPR003697">
    <property type="entry name" value="Maf-like"/>
</dbReference>
<dbReference type="NCBIfam" id="TIGR00172">
    <property type="entry name" value="maf"/>
    <property type="match status" value="1"/>
</dbReference>
<dbReference type="PANTHER" id="PTHR43213">
    <property type="entry name" value="BIFUNCTIONAL DTTP/UTP PYROPHOSPHATASE/METHYLTRANSFERASE PROTEIN-RELATED"/>
    <property type="match status" value="1"/>
</dbReference>
<dbReference type="PANTHER" id="PTHR43213:SF5">
    <property type="entry name" value="BIFUNCTIONAL DTTP_UTP PYROPHOSPHATASE_METHYLTRANSFERASE PROTEIN-RELATED"/>
    <property type="match status" value="1"/>
</dbReference>
<dbReference type="Pfam" id="PF02545">
    <property type="entry name" value="Maf"/>
    <property type="match status" value="1"/>
</dbReference>
<dbReference type="PIRSF" id="PIRSF006305">
    <property type="entry name" value="Maf"/>
    <property type="match status" value="1"/>
</dbReference>
<dbReference type="SUPFAM" id="SSF52972">
    <property type="entry name" value="ITPase-like"/>
    <property type="match status" value="1"/>
</dbReference>
<gene>
    <name type="ordered locus">BT_1676</name>
</gene>
<name>NTPPA_BACTN</name>
<keyword id="KW-0963">Cytoplasm</keyword>
<keyword id="KW-0378">Hydrolase</keyword>
<keyword id="KW-0546">Nucleotide metabolism</keyword>
<keyword id="KW-1185">Reference proteome</keyword>